<accession>Q68IP5</accession>
<name>CT54B_CONMR</name>
<keyword id="KW-0165">Cleavage on pair of basic residues</keyword>
<keyword id="KW-1015">Disulfide bond</keyword>
<keyword id="KW-0301">Gamma-carboxyglutamic acid</keyword>
<keyword id="KW-0964">Secreted</keyword>
<keyword id="KW-0732">Signal</keyword>
<keyword id="KW-0800">Toxin</keyword>
<evidence type="ECO:0000250" key="1"/>
<evidence type="ECO:0000255" key="2"/>
<evidence type="ECO:0000303" key="3">
    <source>
    </source>
</evidence>
<evidence type="ECO:0000305" key="4"/>
<feature type="signal peptide" evidence="2">
    <location>
        <begin position="1" status="less than"/>
        <end position="14"/>
    </location>
</feature>
<feature type="propeptide" id="PRO_0000035039">
    <location>
        <begin position="15"/>
        <end position="40"/>
    </location>
</feature>
<feature type="peptide" id="PRO_0000035040" description="Conotoxin mr5.4b">
    <location>
        <begin position="43"/>
        <end position="54"/>
    </location>
</feature>
<feature type="modified residue" description="4-carboxyglutamate" evidence="1">
    <location>
        <position position="52"/>
    </location>
</feature>
<feature type="non-terminal residue">
    <location>
        <position position="1"/>
    </location>
</feature>
<sequence length="54" mass="6048">ILLLLIASAPSVDAQLKTKDDVPLASFHANVKRTLQKLLNKRCCQIVPQCCEWN</sequence>
<dbReference type="EMBL" id="AY687346">
    <property type="protein sequence ID" value="AAT97072.1"/>
    <property type="molecule type" value="mRNA"/>
</dbReference>
<dbReference type="SMR" id="Q68IP5"/>
<dbReference type="ConoServer" id="877">
    <property type="toxin name" value="Mr5.4b precursor"/>
</dbReference>
<dbReference type="GO" id="GO:0005576">
    <property type="term" value="C:extracellular region"/>
    <property type="evidence" value="ECO:0007669"/>
    <property type="project" value="UniProtKB-SubCell"/>
</dbReference>
<dbReference type="GO" id="GO:0090729">
    <property type="term" value="F:toxin activity"/>
    <property type="evidence" value="ECO:0007669"/>
    <property type="project" value="UniProtKB-KW"/>
</dbReference>
<dbReference type="InterPro" id="IPR031565">
    <property type="entry name" value="T-conotoxin"/>
</dbReference>
<dbReference type="Pfam" id="PF16981">
    <property type="entry name" value="Chi-conotoxin"/>
    <property type="match status" value="1"/>
</dbReference>
<protein>
    <recommendedName>
        <fullName evidence="3">Conotoxin mr5.4b</fullName>
    </recommendedName>
</protein>
<reference key="1">
    <citation type="journal article" date="2005" name="Toxicon">
        <title>Sequence diversity of T-superfamily conotoxins from Conus marmoreus.</title>
        <authorList>
            <person name="Han Y.-H."/>
            <person name="Wang Q."/>
            <person name="Jiang H."/>
            <person name="Miao X.-W."/>
            <person name="Chen J.-S."/>
            <person name="Chi C.-W."/>
        </authorList>
    </citation>
    <scope>NUCLEOTIDE SEQUENCE [MRNA]</scope>
    <source>
        <tissue>Venom duct</tissue>
    </source>
</reference>
<proteinExistence type="evidence at transcript level"/>
<comment type="subcellular location">
    <subcellularLocation>
        <location evidence="1">Secreted</location>
    </subcellularLocation>
</comment>
<comment type="tissue specificity">
    <text>Expressed by the venom duct.</text>
</comment>
<comment type="domain">
    <text>The cysteine framework is V (CC-CC).</text>
</comment>
<comment type="PTM">
    <text evidence="4">Contains 2 disulfide bonds that can be either 'C1-C3, C2-C4' or 'C1-C4, C2-C3', since these disulfide connectivities have been observed for conotoxins with cysteine framework V (for examples, see AC P0DQQ7 and AC P81755).</text>
</comment>
<comment type="similarity">
    <text evidence="4">Belongs to the conotoxin T superfamily.</text>
</comment>
<organism>
    <name type="scientific">Conus marmoreus</name>
    <name type="common">Marble cone</name>
    <dbReference type="NCBI Taxonomy" id="42752"/>
    <lineage>
        <taxon>Eukaryota</taxon>
        <taxon>Metazoa</taxon>
        <taxon>Spiralia</taxon>
        <taxon>Lophotrochozoa</taxon>
        <taxon>Mollusca</taxon>
        <taxon>Gastropoda</taxon>
        <taxon>Caenogastropoda</taxon>
        <taxon>Neogastropoda</taxon>
        <taxon>Conoidea</taxon>
        <taxon>Conidae</taxon>
        <taxon>Conus</taxon>
    </lineage>
</organism>